<protein>
    <recommendedName>
        <fullName>Uncharacterized protein AF_0600</fullName>
    </recommendedName>
</protein>
<gene>
    <name type="ordered locus">AF_0600</name>
</gene>
<proteinExistence type="predicted"/>
<reference key="1">
    <citation type="journal article" date="1997" name="Nature">
        <title>The complete genome sequence of the hyperthermophilic, sulphate-reducing archaeon Archaeoglobus fulgidus.</title>
        <authorList>
            <person name="Klenk H.-P."/>
            <person name="Clayton R.A."/>
            <person name="Tomb J.-F."/>
            <person name="White O."/>
            <person name="Nelson K.E."/>
            <person name="Ketchum K.A."/>
            <person name="Dodson R.J."/>
            <person name="Gwinn M.L."/>
            <person name="Hickey E.K."/>
            <person name="Peterson J.D."/>
            <person name="Richardson D.L."/>
            <person name="Kerlavage A.R."/>
            <person name="Graham D.E."/>
            <person name="Kyrpides N.C."/>
            <person name="Fleischmann R.D."/>
            <person name="Quackenbush J."/>
            <person name="Lee N.H."/>
            <person name="Sutton G.G."/>
            <person name="Gill S.R."/>
            <person name="Kirkness E.F."/>
            <person name="Dougherty B.A."/>
            <person name="McKenney K."/>
            <person name="Adams M.D."/>
            <person name="Loftus B.J."/>
            <person name="Peterson S.N."/>
            <person name="Reich C.I."/>
            <person name="McNeil L.K."/>
            <person name="Badger J.H."/>
            <person name="Glodek A."/>
            <person name="Zhou L."/>
            <person name="Overbeek R."/>
            <person name="Gocayne J.D."/>
            <person name="Weidman J.F."/>
            <person name="McDonald L.A."/>
            <person name="Utterback T.R."/>
            <person name="Cotton M.D."/>
            <person name="Spriggs T."/>
            <person name="Artiach P."/>
            <person name="Kaine B.P."/>
            <person name="Sykes S.M."/>
            <person name="Sadow P.W."/>
            <person name="D'Andrea K.P."/>
            <person name="Bowman C."/>
            <person name="Fujii C."/>
            <person name="Garland S.A."/>
            <person name="Mason T.M."/>
            <person name="Olsen G.J."/>
            <person name="Fraser C.M."/>
            <person name="Smith H.O."/>
            <person name="Woese C.R."/>
            <person name="Venter J.C."/>
        </authorList>
    </citation>
    <scope>NUCLEOTIDE SEQUENCE [LARGE SCALE GENOMIC DNA]</scope>
    <source>
        <strain>ATCC 49558 / DSM 4304 / JCM 9628 / NBRC 100126 / VC-16</strain>
    </source>
</reference>
<dbReference type="EMBL" id="AE000782">
    <property type="protein sequence ID" value="AAB90640.1"/>
    <property type="molecule type" value="Genomic_DNA"/>
</dbReference>
<dbReference type="PIR" id="H69324">
    <property type="entry name" value="H69324"/>
</dbReference>
<dbReference type="RefSeq" id="WP_010878104.1">
    <property type="nucleotide sequence ID" value="NC_000917.1"/>
</dbReference>
<dbReference type="STRING" id="224325.AF_0600"/>
<dbReference type="PaxDb" id="224325-AF_0600"/>
<dbReference type="EnsemblBacteria" id="AAB90640">
    <property type="protein sequence ID" value="AAB90640"/>
    <property type="gene ID" value="AF_0600"/>
</dbReference>
<dbReference type="GeneID" id="1483817"/>
<dbReference type="KEGG" id="afu:AF_0600"/>
<dbReference type="eggNOG" id="arCOG12196">
    <property type="taxonomic scope" value="Archaea"/>
</dbReference>
<dbReference type="HOGENOM" id="CLU_1028963_0_0_2"/>
<dbReference type="Proteomes" id="UP000002199">
    <property type="component" value="Chromosome"/>
</dbReference>
<dbReference type="Gene3D" id="3.40.50.300">
    <property type="entry name" value="P-loop containing nucleotide triphosphate hydrolases"/>
    <property type="match status" value="1"/>
</dbReference>
<dbReference type="InterPro" id="IPR027417">
    <property type="entry name" value="P-loop_NTPase"/>
</dbReference>
<dbReference type="SUPFAM" id="SSF52540">
    <property type="entry name" value="P-loop containing nucleoside triphosphate hydrolases"/>
    <property type="match status" value="1"/>
</dbReference>
<organism>
    <name type="scientific">Archaeoglobus fulgidus (strain ATCC 49558 / DSM 4304 / JCM 9628 / NBRC 100126 / VC-16)</name>
    <dbReference type="NCBI Taxonomy" id="224325"/>
    <lineage>
        <taxon>Archaea</taxon>
        <taxon>Methanobacteriati</taxon>
        <taxon>Methanobacteriota</taxon>
        <taxon>Archaeoglobi</taxon>
        <taxon>Archaeoglobales</taxon>
        <taxon>Archaeoglobaceae</taxon>
        <taxon>Archaeoglobus</taxon>
    </lineage>
</organism>
<feature type="chain" id="PRO_0000127893" description="Uncharacterized protein AF_0600">
    <location>
        <begin position="1"/>
        <end position="310"/>
    </location>
</feature>
<accession>O29655</accession>
<keyword id="KW-1185">Reference proteome</keyword>
<sequence length="310" mass="37342">MIKFVFNGYYRSGTTIFYKILNESNPSYLCLYEPLSPHLFEALTNPEKIVLHLHGFHPYKCYRHLNSQNLDEFQRIHKDICQKFKNYGDNIPIHLSEVVELFDFLNNLEKDTIIQPNRCHFILSQLAQRYRCTFIHIIRNPIDVWIGQTLEPLVLVGNVKRAKLVYKFKNTFIGRYVLTKYLPNREWVNGFAINENFKLIRVFNLDYPDSLDLLDKMLIVWTYCNYYAFKQADNERGMVVYYEEVTREPEKWFRIMTEFSGVNFDLKYAKILKPRITKDEKLRKHFVERLERLGLIDMVNEFYPPKRWFG</sequence>
<name>Y600_ARCFU</name>